<gene>
    <name evidence="1" type="primary">argC</name>
    <name type="ordered locus">Syncc9605_1389</name>
</gene>
<comment type="function">
    <text evidence="1">Catalyzes the NADPH-dependent reduction of N-acetyl-5-glutamyl phosphate to yield N-acetyl-L-glutamate 5-semialdehyde.</text>
</comment>
<comment type="catalytic activity">
    <reaction evidence="1">
        <text>N-acetyl-L-glutamate 5-semialdehyde + phosphate + NADP(+) = N-acetyl-L-glutamyl 5-phosphate + NADPH + H(+)</text>
        <dbReference type="Rhea" id="RHEA:21588"/>
        <dbReference type="ChEBI" id="CHEBI:15378"/>
        <dbReference type="ChEBI" id="CHEBI:29123"/>
        <dbReference type="ChEBI" id="CHEBI:43474"/>
        <dbReference type="ChEBI" id="CHEBI:57783"/>
        <dbReference type="ChEBI" id="CHEBI:57936"/>
        <dbReference type="ChEBI" id="CHEBI:58349"/>
        <dbReference type="EC" id="1.2.1.38"/>
    </reaction>
</comment>
<comment type="pathway">
    <text evidence="1">Amino-acid biosynthesis; L-arginine biosynthesis; N(2)-acetyl-L-ornithine from L-glutamate: step 3/4.</text>
</comment>
<comment type="subcellular location">
    <subcellularLocation>
        <location evidence="1">Cytoplasm</location>
    </subcellularLocation>
</comment>
<comment type="similarity">
    <text evidence="1">Belongs to the NAGSA dehydrogenase family. Type 1 subfamily.</text>
</comment>
<evidence type="ECO:0000255" key="1">
    <source>
        <dbReference type="HAMAP-Rule" id="MF_00150"/>
    </source>
</evidence>
<reference key="1">
    <citation type="submission" date="2005-07" db="EMBL/GenBank/DDBJ databases">
        <title>Complete sequence of Synechococcus sp. CC9605.</title>
        <authorList>
            <consortium name="US DOE Joint Genome Institute"/>
            <person name="Copeland A."/>
            <person name="Lucas S."/>
            <person name="Lapidus A."/>
            <person name="Barry K."/>
            <person name="Detter J.C."/>
            <person name="Glavina T."/>
            <person name="Hammon N."/>
            <person name="Israni S."/>
            <person name="Pitluck S."/>
            <person name="Schmutz J."/>
            <person name="Martinez M."/>
            <person name="Larimer F."/>
            <person name="Land M."/>
            <person name="Kyrpides N."/>
            <person name="Ivanova N."/>
            <person name="Richardson P."/>
        </authorList>
    </citation>
    <scope>NUCLEOTIDE SEQUENCE [LARGE SCALE GENOMIC DNA]</scope>
    <source>
        <strain>CC9605</strain>
    </source>
</reference>
<protein>
    <recommendedName>
        <fullName evidence="1">N-acetyl-gamma-glutamyl-phosphate reductase</fullName>
        <shortName evidence="1">AGPR</shortName>
        <ecNumber evidence="1">1.2.1.38</ecNumber>
    </recommendedName>
    <alternativeName>
        <fullName evidence="1">N-acetyl-glutamate semialdehyde dehydrogenase</fullName>
        <shortName evidence="1">NAGSA dehydrogenase</shortName>
    </alternativeName>
</protein>
<sequence>MATVKGGRVAVIGASGYGGLQTIRLLQGHPGLSVSFLGGERSAGQRWSSVCSFLPLPDDPKVESADPDRIAACSDFAVLSLPNGLACQLAPQLLERGVRVVDLSADFRYRSLEQWLQVYAKEAGSLNRQDAELCSSAVYGLPEWNGPAIADAKLVAAPGCFPTASLMPLLPFLKQGLIETSGIIIDAKTGTSGGGRVPKEAMLLAEASESIAPYGVIGHRHTSEIEQMAMEVAGQDIRLQFTPHLVPMVRGLLSTVYARLRDPGLTAEDCTTVLEAIYRHHPCVQVLPVGTYPATKWARHTNRALLSVQVDTRTGQLVLMSAIDNLIKGQAGQGVQCINLMAGLAPETGLPLQSFYP</sequence>
<keyword id="KW-0028">Amino-acid biosynthesis</keyword>
<keyword id="KW-0055">Arginine biosynthesis</keyword>
<keyword id="KW-0963">Cytoplasm</keyword>
<keyword id="KW-0521">NADP</keyword>
<keyword id="KW-0560">Oxidoreductase</keyword>
<organism>
    <name type="scientific">Synechococcus sp. (strain CC9605)</name>
    <dbReference type="NCBI Taxonomy" id="110662"/>
    <lineage>
        <taxon>Bacteria</taxon>
        <taxon>Bacillati</taxon>
        <taxon>Cyanobacteriota</taxon>
        <taxon>Cyanophyceae</taxon>
        <taxon>Synechococcales</taxon>
        <taxon>Synechococcaceae</taxon>
        <taxon>Synechococcus</taxon>
    </lineage>
</organism>
<dbReference type="EC" id="1.2.1.38" evidence="1"/>
<dbReference type="EMBL" id="CP000110">
    <property type="protein sequence ID" value="ABB35143.1"/>
    <property type="molecule type" value="Genomic_DNA"/>
</dbReference>
<dbReference type="RefSeq" id="WP_011364360.1">
    <property type="nucleotide sequence ID" value="NC_007516.1"/>
</dbReference>
<dbReference type="SMR" id="Q3AJT9"/>
<dbReference type="STRING" id="110662.Syncc9605_1389"/>
<dbReference type="KEGG" id="syd:Syncc9605_1389"/>
<dbReference type="eggNOG" id="COG0002">
    <property type="taxonomic scope" value="Bacteria"/>
</dbReference>
<dbReference type="HOGENOM" id="CLU_006384_0_1_3"/>
<dbReference type="OrthoDB" id="9801289at2"/>
<dbReference type="UniPathway" id="UPA00068">
    <property type="reaction ID" value="UER00108"/>
</dbReference>
<dbReference type="GO" id="GO:0005737">
    <property type="term" value="C:cytoplasm"/>
    <property type="evidence" value="ECO:0007669"/>
    <property type="project" value="UniProtKB-SubCell"/>
</dbReference>
<dbReference type="GO" id="GO:0003942">
    <property type="term" value="F:N-acetyl-gamma-glutamyl-phosphate reductase activity"/>
    <property type="evidence" value="ECO:0007669"/>
    <property type="project" value="UniProtKB-UniRule"/>
</dbReference>
<dbReference type="GO" id="GO:0051287">
    <property type="term" value="F:NAD binding"/>
    <property type="evidence" value="ECO:0007669"/>
    <property type="project" value="InterPro"/>
</dbReference>
<dbReference type="GO" id="GO:0070401">
    <property type="term" value="F:NADP+ binding"/>
    <property type="evidence" value="ECO:0007669"/>
    <property type="project" value="InterPro"/>
</dbReference>
<dbReference type="GO" id="GO:0006526">
    <property type="term" value="P:L-arginine biosynthetic process"/>
    <property type="evidence" value="ECO:0007669"/>
    <property type="project" value="UniProtKB-UniRule"/>
</dbReference>
<dbReference type="CDD" id="cd23934">
    <property type="entry name" value="AGPR_1_C"/>
    <property type="match status" value="1"/>
</dbReference>
<dbReference type="CDD" id="cd17895">
    <property type="entry name" value="AGPR_1_N"/>
    <property type="match status" value="1"/>
</dbReference>
<dbReference type="FunFam" id="3.30.360.10:FF:000014">
    <property type="entry name" value="N-acetyl-gamma-glutamyl-phosphate reductase"/>
    <property type="match status" value="1"/>
</dbReference>
<dbReference type="Gene3D" id="3.30.360.10">
    <property type="entry name" value="Dihydrodipicolinate Reductase, domain 2"/>
    <property type="match status" value="1"/>
</dbReference>
<dbReference type="Gene3D" id="3.40.50.720">
    <property type="entry name" value="NAD(P)-binding Rossmann-like Domain"/>
    <property type="match status" value="1"/>
</dbReference>
<dbReference type="HAMAP" id="MF_00150">
    <property type="entry name" value="ArgC_type1"/>
    <property type="match status" value="1"/>
</dbReference>
<dbReference type="InterPro" id="IPR023013">
    <property type="entry name" value="AGPR_AS"/>
</dbReference>
<dbReference type="InterPro" id="IPR000706">
    <property type="entry name" value="AGPR_type-1"/>
</dbReference>
<dbReference type="InterPro" id="IPR036291">
    <property type="entry name" value="NAD(P)-bd_dom_sf"/>
</dbReference>
<dbReference type="InterPro" id="IPR050085">
    <property type="entry name" value="NAGSA_dehydrogenase"/>
</dbReference>
<dbReference type="InterPro" id="IPR000534">
    <property type="entry name" value="Semialdehyde_DH_NAD-bd"/>
</dbReference>
<dbReference type="NCBIfam" id="TIGR01850">
    <property type="entry name" value="argC"/>
    <property type="match status" value="1"/>
</dbReference>
<dbReference type="PANTHER" id="PTHR32338:SF10">
    <property type="entry name" value="N-ACETYL-GAMMA-GLUTAMYL-PHOSPHATE REDUCTASE, CHLOROPLASTIC-RELATED"/>
    <property type="match status" value="1"/>
</dbReference>
<dbReference type="PANTHER" id="PTHR32338">
    <property type="entry name" value="N-ACETYL-GAMMA-GLUTAMYL-PHOSPHATE REDUCTASE, CHLOROPLASTIC-RELATED-RELATED"/>
    <property type="match status" value="1"/>
</dbReference>
<dbReference type="Pfam" id="PF01118">
    <property type="entry name" value="Semialdhyde_dh"/>
    <property type="match status" value="1"/>
</dbReference>
<dbReference type="Pfam" id="PF22698">
    <property type="entry name" value="Semialdhyde_dhC_1"/>
    <property type="match status" value="1"/>
</dbReference>
<dbReference type="SMART" id="SM00859">
    <property type="entry name" value="Semialdhyde_dh"/>
    <property type="match status" value="1"/>
</dbReference>
<dbReference type="SUPFAM" id="SSF55347">
    <property type="entry name" value="Glyceraldehyde-3-phosphate dehydrogenase-like, C-terminal domain"/>
    <property type="match status" value="1"/>
</dbReference>
<dbReference type="SUPFAM" id="SSF51735">
    <property type="entry name" value="NAD(P)-binding Rossmann-fold domains"/>
    <property type="match status" value="1"/>
</dbReference>
<dbReference type="PROSITE" id="PS01224">
    <property type="entry name" value="ARGC"/>
    <property type="match status" value="1"/>
</dbReference>
<accession>Q3AJT9</accession>
<feature type="chain" id="PRO_1000011074" description="N-acetyl-gamma-glutamyl-phosphate reductase">
    <location>
        <begin position="1"/>
        <end position="357"/>
    </location>
</feature>
<feature type="active site" evidence="1">
    <location>
        <position position="160"/>
    </location>
</feature>
<name>ARGC_SYNSC</name>
<proteinExistence type="inferred from homology"/>